<gene>
    <name evidence="4" type="primary">DUF9</name>
    <name evidence="7" type="ordered locus">At5g23780</name>
    <name evidence="8" type="ORF">MRO11.18</name>
</gene>
<dbReference type="EMBL" id="AB005244">
    <property type="protein sequence ID" value="BAB10051.1"/>
    <property type="molecule type" value="Genomic_DNA"/>
</dbReference>
<dbReference type="EMBL" id="CP002688">
    <property type="status" value="NOT_ANNOTATED_CDS"/>
    <property type="molecule type" value="Genomic_DNA"/>
</dbReference>
<dbReference type="SMR" id="Q9FFA2"/>
<dbReference type="PaxDb" id="3702-AT5G23780.1"/>
<dbReference type="ProteomicsDB" id="222186"/>
<dbReference type="Araport" id="AT5G23780"/>
<dbReference type="TAIR" id="AT5G23780">
    <property type="gene designation" value="DUF9"/>
</dbReference>
<dbReference type="eggNOG" id="ENOG502QTQX">
    <property type="taxonomic scope" value="Eukaryota"/>
</dbReference>
<dbReference type="HOGENOM" id="CLU_007138_1_1_1"/>
<dbReference type="InParanoid" id="Q9FFA2"/>
<dbReference type="PhylomeDB" id="Q9FFA2"/>
<dbReference type="PRO" id="PR:Q9FFA2"/>
<dbReference type="Proteomes" id="UP000006548">
    <property type="component" value="Chromosome 5"/>
</dbReference>
<dbReference type="ExpressionAtlas" id="Q9FFA2">
    <property type="expression patterns" value="baseline and differential"/>
</dbReference>
<dbReference type="GO" id="GO:0005634">
    <property type="term" value="C:nucleus"/>
    <property type="evidence" value="ECO:0000314"/>
    <property type="project" value="TAIR"/>
</dbReference>
<dbReference type="CDD" id="cd20405">
    <property type="entry name" value="Tudor_Agenet_AtDUF_rpt1_3"/>
    <property type="match status" value="1"/>
</dbReference>
<dbReference type="CDD" id="cd20406">
    <property type="entry name" value="Tudor_Agenet_AtDUF_rpt2_4"/>
    <property type="match status" value="1"/>
</dbReference>
<dbReference type="InterPro" id="IPR008395">
    <property type="entry name" value="Agenet-like_dom"/>
</dbReference>
<dbReference type="InterPro" id="IPR014002">
    <property type="entry name" value="Agenet_dom_plant"/>
</dbReference>
<dbReference type="InterPro" id="IPR007930">
    <property type="entry name" value="DUF724"/>
</dbReference>
<dbReference type="PANTHER" id="PTHR31917">
    <property type="entry name" value="AGENET DOMAIN-CONTAINING PROTEIN-RELATED"/>
    <property type="match status" value="1"/>
</dbReference>
<dbReference type="PANTHER" id="PTHR31917:SF50">
    <property type="entry name" value="DUF724 DOMAIN-CONTAINING PROTEIN 1-RELATED"/>
    <property type="match status" value="1"/>
</dbReference>
<dbReference type="Pfam" id="PF05641">
    <property type="entry name" value="Agenet"/>
    <property type="match status" value="1"/>
</dbReference>
<dbReference type="Pfam" id="PF05266">
    <property type="entry name" value="DUF724"/>
    <property type="match status" value="1"/>
</dbReference>
<dbReference type="SMART" id="SM00743">
    <property type="entry name" value="Agenet"/>
    <property type="match status" value="2"/>
</dbReference>
<reference key="1">
    <citation type="journal article" date="1997" name="DNA Res.">
        <title>Structural analysis of Arabidopsis thaliana chromosome 5. I. Sequence features of the 1.6 Mb regions covered by twenty physically assigned P1 clones.</title>
        <authorList>
            <person name="Sato S."/>
            <person name="Kotani H."/>
            <person name="Nakamura Y."/>
            <person name="Kaneko T."/>
            <person name="Asamizu E."/>
            <person name="Fukami M."/>
            <person name="Miyajima N."/>
            <person name="Tabata S."/>
        </authorList>
    </citation>
    <scope>NUCLEOTIDE SEQUENCE [LARGE SCALE GENOMIC DNA]</scope>
    <source>
        <strain>cv. Columbia</strain>
    </source>
</reference>
<reference key="2">
    <citation type="journal article" date="2017" name="Plant J.">
        <title>Araport11: a complete reannotation of the Arabidopsis thaliana reference genome.</title>
        <authorList>
            <person name="Cheng C.Y."/>
            <person name="Krishnakumar V."/>
            <person name="Chan A.P."/>
            <person name="Thibaud-Nissen F."/>
            <person name="Schobel S."/>
            <person name="Town C.D."/>
        </authorList>
    </citation>
    <scope>GENOME REANNOTATION</scope>
    <source>
        <strain>cv. Columbia</strain>
    </source>
</reference>
<reference key="3">
    <citation type="journal article" date="2010" name="Plant Mol. Biol.">
        <title>Characterization of DUF724 gene family in Arabidopsis thaliana.</title>
        <authorList>
            <person name="Cao X."/>
            <person name="Yang K.Z."/>
            <person name="Xia C."/>
            <person name="Zhang X.Q."/>
            <person name="Chen L.Q."/>
            <person name="Ye D."/>
        </authorList>
    </citation>
    <scope>FUNCTION</scope>
    <scope>GENE FAMILY</scope>
    <scope>NOMENCLATURE</scope>
    <scope>SUBCELLULAR LOCATION</scope>
    <scope>TISSUE SPECIFICITY</scope>
</reference>
<name>DUF9_ARATH</name>
<sequence>MFSPGTTVEVSSKINNKEVVWVPAVVIKEFKEDDEYKYIVRVYDKSFSCKGNKAARLNKTVDLCSLRPTPPSISVEEYQLKEYVEVFHDGMGWRQGRVMKIQERVMLSQGRVMVSQGRVMGNLSQKCYIVLLEATKKQISFKQSDLRPLQVWEDGVWKMLQTRESSLTQGSGDETSDSVRNANESDPPVTPRPGITTPPLKQIEAETQRKTLPRNQNASVNDSTRENENSEDINRKRKREESLCSDASVEDTTMTLPFEKKLSIWKTLESVETVPQSPHFSPLVETREDCREMSAVGMMLTFPCLLEEVKSLQHDNSISSLISLSNNFCELEKHGFNVKAPQSRISKLLSLRGKQSMKMDELKGAEKVTAEKESIKIENERKILELQRLNEEVDKEIAQSKSCAAKIVQQLEDVELQFQTTASAPW</sequence>
<proteinExistence type="evidence at transcript level"/>
<keyword id="KW-0175">Coiled coil</keyword>
<keyword id="KW-0341">Growth regulation</keyword>
<keyword id="KW-0539">Nucleus</keyword>
<keyword id="KW-1185">Reference proteome</keyword>
<keyword id="KW-0813">Transport</keyword>
<comment type="function">
    <text evidence="6">May be involved in the polar growth of plant cells via transportation of RNAs.</text>
</comment>
<comment type="subcellular location">
    <subcellularLocation>
        <location evidence="3">Nucleus</location>
    </subcellularLocation>
</comment>
<comment type="tissue specificity">
    <text evidence="3">Expressed in flowers.</text>
</comment>
<protein>
    <recommendedName>
        <fullName evidence="5">DUF724 domain-containing protein 9</fullName>
        <shortName evidence="4">AtDUF9</shortName>
    </recommendedName>
</protein>
<feature type="chain" id="PRO_0000436427" description="DUF724 domain-containing protein 9">
    <location>
        <begin position="1"/>
        <end position="426"/>
    </location>
</feature>
<feature type="domain" description="DUF724" evidence="1">
    <location>
        <begin position="256"/>
        <end position="425"/>
    </location>
</feature>
<feature type="region of interest" description="Disordered" evidence="2">
    <location>
        <begin position="164"/>
        <end position="248"/>
    </location>
</feature>
<feature type="coiled-coil region" evidence="1">
    <location>
        <begin position="370"/>
        <end position="402"/>
    </location>
</feature>
<feature type="compositionally biased region" description="Polar residues" evidence="2">
    <location>
        <begin position="164"/>
        <end position="184"/>
    </location>
</feature>
<feature type="compositionally biased region" description="Polar residues" evidence="2">
    <location>
        <begin position="213"/>
        <end position="222"/>
    </location>
</feature>
<feature type="compositionally biased region" description="Basic and acidic residues" evidence="2">
    <location>
        <begin position="223"/>
        <end position="242"/>
    </location>
</feature>
<organism>
    <name type="scientific">Arabidopsis thaliana</name>
    <name type="common">Mouse-ear cress</name>
    <dbReference type="NCBI Taxonomy" id="3702"/>
    <lineage>
        <taxon>Eukaryota</taxon>
        <taxon>Viridiplantae</taxon>
        <taxon>Streptophyta</taxon>
        <taxon>Embryophyta</taxon>
        <taxon>Tracheophyta</taxon>
        <taxon>Spermatophyta</taxon>
        <taxon>Magnoliopsida</taxon>
        <taxon>eudicotyledons</taxon>
        <taxon>Gunneridae</taxon>
        <taxon>Pentapetalae</taxon>
        <taxon>rosids</taxon>
        <taxon>malvids</taxon>
        <taxon>Brassicales</taxon>
        <taxon>Brassicaceae</taxon>
        <taxon>Camelineae</taxon>
        <taxon>Arabidopsis</taxon>
    </lineage>
</organism>
<evidence type="ECO:0000255" key="1"/>
<evidence type="ECO:0000256" key="2">
    <source>
        <dbReference type="SAM" id="MobiDB-lite"/>
    </source>
</evidence>
<evidence type="ECO:0000269" key="3">
    <source>
    </source>
</evidence>
<evidence type="ECO:0000303" key="4">
    <source>
    </source>
</evidence>
<evidence type="ECO:0000305" key="5"/>
<evidence type="ECO:0000305" key="6">
    <source>
    </source>
</evidence>
<evidence type="ECO:0000312" key="7">
    <source>
        <dbReference type="Araport" id="AT5G23780"/>
    </source>
</evidence>
<evidence type="ECO:0000312" key="8">
    <source>
        <dbReference type="EMBL" id="BAB10051.1"/>
    </source>
</evidence>
<accession>Q9FFA2</accession>